<keyword id="KW-0687">Ribonucleoprotein</keyword>
<keyword id="KW-0689">Ribosomal protein</keyword>
<keyword id="KW-0694">RNA-binding</keyword>
<keyword id="KW-0699">rRNA-binding</keyword>
<sequence>MKVVAFERSVQGTGASRRLRNSGKTPGIIYGGAADPKMIELDHNALWHALKKEAFHSSILDLEVAGKSEKALLRAFQMHPFKPLVLHVDFQRVSANDKIHVKVPLHFMNQETAPGVKLGHGLVNHIVNDLEVSCLPADLPEFIEVDVGNMEVGQTLHLTDLKLPKGVTVVTHGDENPAIASISLPAGAASAAEGEGEGETPAA</sequence>
<name>RL25_CUPPJ</name>
<gene>
    <name evidence="1" type="primary">rplY</name>
    <name evidence="1" type="synonym">ctc</name>
    <name type="ordered locus">Reut_A0341</name>
</gene>
<accession>Q476G0</accession>
<proteinExistence type="inferred from homology"/>
<comment type="function">
    <text evidence="1">This is one of the proteins that binds to the 5S RNA in the ribosome where it forms part of the central protuberance.</text>
</comment>
<comment type="subunit">
    <text evidence="1">Part of the 50S ribosomal subunit; part of the 5S rRNA/L5/L18/L25 subcomplex. Contacts the 5S rRNA. Binds to the 5S rRNA independently of L5 and L18.</text>
</comment>
<comment type="similarity">
    <text evidence="1">Belongs to the bacterial ribosomal protein bL25 family. CTC subfamily.</text>
</comment>
<organism>
    <name type="scientific">Cupriavidus pinatubonensis (strain JMP 134 / LMG 1197)</name>
    <name type="common">Cupriavidus necator (strain JMP 134)</name>
    <dbReference type="NCBI Taxonomy" id="264198"/>
    <lineage>
        <taxon>Bacteria</taxon>
        <taxon>Pseudomonadati</taxon>
        <taxon>Pseudomonadota</taxon>
        <taxon>Betaproteobacteria</taxon>
        <taxon>Burkholderiales</taxon>
        <taxon>Burkholderiaceae</taxon>
        <taxon>Cupriavidus</taxon>
    </lineage>
</organism>
<protein>
    <recommendedName>
        <fullName evidence="1">Large ribosomal subunit protein bL25</fullName>
    </recommendedName>
    <alternativeName>
        <fullName evidence="2">50S ribosomal protein L25</fullName>
    </alternativeName>
    <alternativeName>
        <fullName evidence="1">General stress protein CTC</fullName>
    </alternativeName>
</protein>
<dbReference type="EMBL" id="CP000090">
    <property type="protein sequence ID" value="AAZ59723.1"/>
    <property type="molecule type" value="Genomic_DNA"/>
</dbReference>
<dbReference type="SMR" id="Q476G0"/>
<dbReference type="STRING" id="264198.Reut_A0341"/>
<dbReference type="KEGG" id="reu:Reut_A0341"/>
<dbReference type="eggNOG" id="COG1825">
    <property type="taxonomic scope" value="Bacteria"/>
</dbReference>
<dbReference type="HOGENOM" id="CLU_075939_0_1_4"/>
<dbReference type="OrthoDB" id="9806411at2"/>
<dbReference type="GO" id="GO:0022625">
    <property type="term" value="C:cytosolic large ribosomal subunit"/>
    <property type="evidence" value="ECO:0007669"/>
    <property type="project" value="TreeGrafter"/>
</dbReference>
<dbReference type="GO" id="GO:0008097">
    <property type="term" value="F:5S rRNA binding"/>
    <property type="evidence" value="ECO:0007669"/>
    <property type="project" value="InterPro"/>
</dbReference>
<dbReference type="GO" id="GO:0003735">
    <property type="term" value="F:structural constituent of ribosome"/>
    <property type="evidence" value="ECO:0007669"/>
    <property type="project" value="InterPro"/>
</dbReference>
<dbReference type="GO" id="GO:0006412">
    <property type="term" value="P:translation"/>
    <property type="evidence" value="ECO:0007669"/>
    <property type="project" value="UniProtKB-UniRule"/>
</dbReference>
<dbReference type="CDD" id="cd00495">
    <property type="entry name" value="Ribosomal_L25_TL5_CTC"/>
    <property type="match status" value="1"/>
</dbReference>
<dbReference type="Gene3D" id="2.170.120.20">
    <property type="entry name" value="Ribosomal protein L25, beta domain"/>
    <property type="match status" value="1"/>
</dbReference>
<dbReference type="Gene3D" id="2.40.240.10">
    <property type="entry name" value="Ribosomal Protein L25, Chain P"/>
    <property type="match status" value="1"/>
</dbReference>
<dbReference type="HAMAP" id="MF_01336">
    <property type="entry name" value="Ribosomal_bL25"/>
    <property type="match status" value="1"/>
</dbReference>
<dbReference type="HAMAP" id="MF_01334">
    <property type="entry name" value="Ribosomal_bL25_CTC"/>
    <property type="match status" value="1"/>
</dbReference>
<dbReference type="InterPro" id="IPR020056">
    <property type="entry name" value="Rbsml_bL25/Gln-tRNA_synth_N"/>
</dbReference>
<dbReference type="InterPro" id="IPR011035">
    <property type="entry name" value="Ribosomal_bL25/Gln-tRNA_synth"/>
</dbReference>
<dbReference type="InterPro" id="IPR020057">
    <property type="entry name" value="Ribosomal_bL25_b-dom"/>
</dbReference>
<dbReference type="InterPro" id="IPR037121">
    <property type="entry name" value="Ribosomal_bL25_C"/>
</dbReference>
<dbReference type="InterPro" id="IPR001021">
    <property type="entry name" value="Ribosomal_bL25_long"/>
</dbReference>
<dbReference type="InterPro" id="IPR020055">
    <property type="entry name" value="Ribosomal_bL25_short"/>
</dbReference>
<dbReference type="InterPro" id="IPR029751">
    <property type="entry name" value="Ribosomal_L25_dom"/>
</dbReference>
<dbReference type="InterPro" id="IPR020930">
    <property type="entry name" value="Ribosomal_uL5_bac-type"/>
</dbReference>
<dbReference type="NCBIfam" id="TIGR00731">
    <property type="entry name" value="bL25_bact_ctc"/>
    <property type="match status" value="1"/>
</dbReference>
<dbReference type="NCBIfam" id="NF004128">
    <property type="entry name" value="PRK05618.1-2"/>
    <property type="match status" value="1"/>
</dbReference>
<dbReference type="NCBIfam" id="NF004130">
    <property type="entry name" value="PRK05618.1-5"/>
    <property type="match status" value="1"/>
</dbReference>
<dbReference type="NCBIfam" id="NF004612">
    <property type="entry name" value="PRK05943.1"/>
    <property type="match status" value="1"/>
</dbReference>
<dbReference type="PANTHER" id="PTHR33284">
    <property type="entry name" value="RIBOSOMAL PROTEIN L25/GLN-TRNA SYNTHETASE, ANTI-CODON-BINDING DOMAIN-CONTAINING PROTEIN"/>
    <property type="match status" value="1"/>
</dbReference>
<dbReference type="PANTHER" id="PTHR33284:SF1">
    <property type="entry name" value="RIBOSOMAL PROTEIN L25_GLN-TRNA SYNTHETASE, ANTI-CODON-BINDING DOMAIN-CONTAINING PROTEIN"/>
    <property type="match status" value="1"/>
</dbReference>
<dbReference type="Pfam" id="PF01386">
    <property type="entry name" value="Ribosomal_L25p"/>
    <property type="match status" value="1"/>
</dbReference>
<dbReference type="Pfam" id="PF14693">
    <property type="entry name" value="Ribosomal_TL5_C"/>
    <property type="match status" value="1"/>
</dbReference>
<dbReference type="SUPFAM" id="SSF50715">
    <property type="entry name" value="Ribosomal protein L25-like"/>
    <property type="match status" value="1"/>
</dbReference>
<reference key="1">
    <citation type="journal article" date="2010" name="PLoS ONE">
        <title>The complete multipartite genome sequence of Cupriavidus necator JMP134, a versatile pollutant degrader.</title>
        <authorList>
            <person name="Lykidis A."/>
            <person name="Perez-Pantoja D."/>
            <person name="Ledger T."/>
            <person name="Mavromatis K."/>
            <person name="Anderson I.J."/>
            <person name="Ivanova N.N."/>
            <person name="Hooper S.D."/>
            <person name="Lapidus A."/>
            <person name="Lucas S."/>
            <person name="Gonzalez B."/>
            <person name="Kyrpides N.C."/>
        </authorList>
    </citation>
    <scope>NUCLEOTIDE SEQUENCE [LARGE SCALE GENOMIC DNA]</scope>
    <source>
        <strain>JMP134 / LMG 1197</strain>
    </source>
</reference>
<evidence type="ECO:0000255" key="1">
    <source>
        <dbReference type="HAMAP-Rule" id="MF_01334"/>
    </source>
</evidence>
<evidence type="ECO:0000305" key="2"/>
<feature type="chain" id="PRO_0000244232" description="Large ribosomal subunit protein bL25">
    <location>
        <begin position="1"/>
        <end position="203"/>
    </location>
</feature>